<accession>A5E969</accession>
<comment type="function">
    <text evidence="1">This protein binds to 23S rRNA in the presence of protein L20.</text>
</comment>
<comment type="subunit">
    <text evidence="1">Part of the 50S ribosomal subunit. Contacts protein L20.</text>
</comment>
<comment type="similarity">
    <text evidence="1">Belongs to the bacterial ribosomal protein bL21 family.</text>
</comment>
<feature type="chain" id="PRO_1000067808" description="Large ribosomal subunit protein bL21">
    <location>
        <begin position="1"/>
        <end position="127"/>
    </location>
</feature>
<feature type="region of interest" description="Disordered" evidence="2">
    <location>
        <begin position="102"/>
        <end position="127"/>
    </location>
</feature>
<sequence length="127" mass="13649">MFAVIKTGGKQYRVAPDDVLEIGKIDGEPGTIVQLNEVLVVGGDTPVLGVPAVAGASVAVEVLDHKRGPKVIAFKKRRRKNSRRKRGYRDELTLIRVSEILTDNAKPTKGPRPKKAKAEAPAADAAE</sequence>
<organism>
    <name type="scientific">Bradyrhizobium sp. (strain BTAi1 / ATCC BAA-1182)</name>
    <dbReference type="NCBI Taxonomy" id="288000"/>
    <lineage>
        <taxon>Bacteria</taxon>
        <taxon>Pseudomonadati</taxon>
        <taxon>Pseudomonadota</taxon>
        <taxon>Alphaproteobacteria</taxon>
        <taxon>Hyphomicrobiales</taxon>
        <taxon>Nitrobacteraceae</taxon>
        <taxon>Bradyrhizobium</taxon>
    </lineage>
</organism>
<keyword id="KW-1185">Reference proteome</keyword>
<keyword id="KW-0687">Ribonucleoprotein</keyword>
<keyword id="KW-0689">Ribosomal protein</keyword>
<keyword id="KW-0694">RNA-binding</keyword>
<keyword id="KW-0699">rRNA-binding</keyword>
<evidence type="ECO:0000255" key="1">
    <source>
        <dbReference type="HAMAP-Rule" id="MF_01363"/>
    </source>
</evidence>
<evidence type="ECO:0000256" key="2">
    <source>
        <dbReference type="SAM" id="MobiDB-lite"/>
    </source>
</evidence>
<evidence type="ECO:0000305" key="3"/>
<protein>
    <recommendedName>
        <fullName evidence="1">Large ribosomal subunit protein bL21</fullName>
    </recommendedName>
    <alternativeName>
        <fullName evidence="3">50S ribosomal protein L21</fullName>
    </alternativeName>
</protein>
<name>RL21_BRASB</name>
<proteinExistence type="inferred from homology"/>
<gene>
    <name evidence="1" type="primary">rplU</name>
    <name type="ordered locus">BBta_0427</name>
</gene>
<dbReference type="EMBL" id="CP000494">
    <property type="protein sequence ID" value="ABQ32713.1"/>
    <property type="molecule type" value="Genomic_DNA"/>
</dbReference>
<dbReference type="RefSeq" id="WP_008961803.1">
    <property type="nucleotide sequence ID" value="NC_009485.1"/>
</dbReference>
<dbReference type="SMR" id="A5E969"/>
<dbReference type="STRING" id="288000.BBta_0427"/>
<dbReference type="KEGG" id="bbt:BBta_0427"/>
<dbReference type="eggNOG" id="COG0261">
    <property type="taxonomic scope" value="Bacteria"/>
</dbReference>
<dbReference type="HOGENOM" id="CLU_061463_1_2_5"/>
<dbReference type="OrthoDB" id="9813334at2"/>
<dbReference type="Proteomes" id="UP000000246">
    <property type="component" value="Chromosome"/>
</dbReference>
<dbReference type="GO" id="GO:0005737">
    <property type="term" value="C:cytoplasm"/>
    <property type="evidence" value="ECO:0007669"/>
    <property type="project" value="UniProtKB-ARBA"/>
</dbReference>
<dbReference type="GO" id="GO:1990904">
    <property type="term" value="C:ribonucleoprotein complex"/>
    <property type="evidence" value="ECO:0007669"/>
    <property type="project" value="UniProtKB-KW"/>
</dbReference>
<dbReference type="GO" id="GO:0005840">
    <property type="term" value="C:ribosome"/>
    <property type="evidence" value="ECO:0007669"/>
    <property type="project" value="UniProtKB-KW"/>
</dbReference>
<dbReference type="GO" id="GO:0019843">
    <property type="term" value="F:rRNA binding"/>
    <property type="evidence" value="ECO:0007669"/>
    <property type="project" value="UniProtKB-UniRule"/>
</dbReference>
<dbReference type="GO" id="GO:0003735">
    <property type="term" value="F:structural constituent of ribosome"/>
    <property type="evidence" value="ECO:0007669"/>
    <property type="project" value="InterPro"/>
</dbReference>
<dbReference type="GO" id="GO:0006412">
    <property type="term" value="P:translation"/>
    <property type="evidence" value="ECO:0007669"/>
    <property type="project" value="UniProtKB-UniRule"/>
</dbReference>
<dbReference type="HAMAP" id="MF_01363">
    <property type="entry name" value="Ribosomal_bL21"/>
    <property type="match status" value="1"/>
</dbReference>
<dbReference type="InterPro" id="IPR028909">
    <property type="entry name" value="bL21-like"/>
</dbReference>
<dbReference type="InterPro" id="IPR036164">
    <property type="entry name" value="bL21-like_sf"/>
</dbReference>
<dbReference type="InterPro" id="IPR001787">
    <property type="entry name" value="Ribosomal_bL21"/>
</dbReference>
<dbReference type="NCBIfam" id="TIGR00061">
    <property type="entry name" value="L21"/>
    <property type="match status" value="1"/>
</dbReference>
<dbReference type="PANTHER" id="PTHR21349">
    <property type="entry name" value="50S RIBOSOMAL PROTEIN L21"/>
    <property type="match status" value="1"/>
</dbReference>
<dbReference type="PANTHER" id="PTHR21349:SF0">
    <property type="entry name" value="LARGE RIBOSOMAL SUBUNIT PROTEIN BL21M"/>
    <property type="match status" value="1"/>
</dbReference>
<dbReference type="Pfam" id="PF00829">
    <property type="entry name" value="Ribosomal_L21p"/>
    <property type="match status" value="1"/>
</dbReference>
<dbReference type="SUPFAM" id="SSF141091">
    <property type="entry name" value="L21p-like"/>
    <property type="match status" value="1"/>
</dbReference>
<reference key="1">
    <citation type="journal article" date="2007" name="Science">
        <title>Legumes symbioses: absence of nod genes in photosynthetic bradyrhizobia.</title>
        <authorList>
            <person name="Giraud E."/>
            <person name="Moulin L."/>
            <person name="Vallenet D."/>
            <person name="Barbe V."/>
            <person name="Cytryn E."/>
            <person name="Avarre J.-C."/>
            <person name="Jaubert M."/>
            <person name="Simon D."/>
            <person name="Cartieaux F."/>
            <person name="Prin Y."/>
            <person name="Bena G."/>
            <person name="Hannibal L."/>
            <person name="Fardoux J."/>
            <person name="Kojadinovic M."/>
            <person name="Vuillet L."/>
            <person name="Lajus A."/>
            <person name="Cruveiller S."/>
            <person name="Rouy Z."/>
            <person name="Mangenot S."/>
            <person name="Segurens B."/>
            <person name="Dossat C."/>
            <person name="Franck W.L."/>
            <person name="Chang W.-S."/>
            <person name="Saunders E."/>
            <person name="Bruce D."/>
            <person name="Richardson P."/>
            <person name="Normand P."/>
            <person name="Dreyfus B."/>
            <person name="Pignol D."/>
            <person name="Stacey G."/>
            <person name="Emerich D."/>
            <person name="Vermeglio A."/>
            <person name="Medigue C."/>
            <person name="Sadowsky M."/>
        </authorList>
    </citation>
    <scope>NUCLEOTIDE SEQUENCE [LARGE SCALE GENOMIC DNA]</scope>
    <source>
        <strain>BTAi1 / ATCC BAA-1182</strain>
    </source>
</reference>